<comment type="function">
    <text evidence="1">Catalyzes a mechanistically unusual reaction, the ATP-dependent insertion of CO2 between the N7 and N8 nitrogen atoms of 7,8-diaminopelargonic acid (DAPA, also called 7,8-diammoniononanoate) to form a ureido ring.</text>
</comment>
<comment type="catalytic activity">
    <reaction evidence="1">
        <text>(7R,8S)-7,8-diammoniononanoate + CO2 + ATP = (4R,5S)-dethiobiotin + ADP + phosphate + 3 H(+)</text>
        <dbReference type="Rhea" id="RHEA:15805"/>
        <dbReference type="ChEBI" id="CHEBI:15378"/>
        <dbReference type="ChEBI" id="CHEBI:16526"/>
        <dbReference type="ChEBI" id="CHEBI:30616"/>
        <dbReference type="ChEBI" id="CHEBI:43474"/>
        <dbReference type="ChEBI" id="CHEBI:149469"/>
        <dbReference type="ChEBI" id="CHEBI:149473"/>
        <dbReference type="ChEBI" id="CHEBI:456216"/>
        <dbReference type="EC" id="6.3.3.3"/>
    </reaction>
</comment>
<comment type="cofactor">
    <cofactor evidence="1">
        <name>Mg(2+)</name>
        <dbReference type="ChEBI" id="CHEBI:18420"/>
    </cofactor>
</comment>
<comment type="pathway">
    <text evidence="1">Cofactor biosynthesis; biotin biosynthesis; biotin from 7,8-diaminononanoate: step 1/2.</text>
</comment>
<comment type="subunit">
    <text evidence="1">Homodimer.</text>
</comment>
<comment type="subcellular location">
    <subcellularLocation>
        <location evidence="1">Cytoplasm</location>
    </subcellularLocation>
</comment>
<comment type="similarity">
    <text evidence="1">Belongs to the dethiobiotin synthetase family.</text>
</comment>
<feature type="chain" id="PRO_0000187956" description="ATP-dependent dethiobiotin synthetase BioD">
    <location>
        <begin position="1"/>
        <end position="219"/>
    </location>
</feature>
<feature type="active site" evidence="1">
    <location>
        <position position="32"/>
    </location>
</feature>
<feature type="binding site" evidence="1">
    <location>
        <begin position="12"/>
        <end position="17"/>
    </location>
    <ligand>
        <name>ATP</name>
        <dbReference type="ChEBI" id="CHEBI:30616"/>
    </ligand>
</feature>
<feature type="binding site" evidence="1">
    <location>
        <position position="16"/>
    </location>
    <ligand>
        <name>Mg(2+)</name>
        <dbReference type="ChEBI" id="CHEBI:18420"/>
    </ligand>
</feature>
<feature type="binding site" evidence="1">
    <location>
        <position position="43"/>
    </location>
    <ligand>
        <name>ATP</name>
        <dbReference type="ChEBI" id="CHEBI:30616"/>
    </ligand>
</feature>
<feature type="binding site" evidence="1">
    <location>
        <position position="43"/>
    </location>
    <ligand>
        <name>Mg(2+)</name>
        <dbReference type="ChEBI" id="CHEBI:18420"/>
    </ligand>
</feature>
<feature type="binding site" evidence="1">
    <location>
        <begin position="96"/>
        <end position="99"/>
    </location>
    <ligand>
        <name>ATP</name>
        <dbReference type="ChEBI" id="CHEBI:30616"/>
    </ligand>
</feature>
<feature type="binding site" evidence="1">
    <location>
        <position position="96"/>
    </location>
    <ligand>
        <name>Mg(2+)</name>
        <dbReference type="ChEBI" id="CHEBI:18420"/>
    </ligand>
</feature>
<evidence type="ECO:0000255" key="1">
    <source>
        <dbReference type="HAMAP-Rule" id="MF_00336"/>
    </source>
</evidence>
<gene>
    <name evidence="1" type="primary">bioD</name>
    <name type="ordered locus">CPn_1042</name>
    <name type="ordered locus">CP_0810</name>
    <name type="ordered locus">CpB1082</name>
</gene>
<organism>
    <name type="scientific">Chlamydia pneumoniae</name>
    <name type="common">Chlamydophila pneumoniae</name>
    <dbReference type="NCBI Taxonomy" id="83558"/>
    <lineage>
        <taxon>Bacteria</taxon>
        <taxon>Pseudomonadati</taxon>
        <taxon>Chlamydiota</taxon>
        <taxon>Chlamydiia</taxon>
        <taxon>Chlamydiales</taxon>
        <taxon>Chlamydiaceae</taxon>
        <taxon>Chlamydia/Chlamydophila group</taxon>
        <taxon>Chlamydia</taxon>
    </lineage>
</organism>
<sequence length="219" mass="24165">MQRIIIVGIDTGVGKTIVSAILARALNAEYWKPIQAGNLENSDSNIVHELSGAYCHPEAYRLHKPLSPHKAAQIDNVSIEESHICAPKTTSNLIIETSGGFLSPCTSKRLQGDVFSSWSCSWILVSQAYLGSINHTCLTVEAMRSRNLNILGMVVNGYPEDEEHWLTQEIKLPIIGTLAKEKEITKTIISCYAEQWKEVWTSNHQGIQGVSGTPSLNLH</sequence>
<reference key="1">
    <citation type="journal article" date="1999" name="Nat. Genet.">
        <title>Comparative genomes of Chlamydia pneumoniae and C. trachomatis.</title>
        <authorList>
            <person name="Kalman S."/>
            <person name="Mitchell W.P."/>
            <person name="Marathe R."/>
            <person name="Lammel C.J."/>
            <person name="Fan J."/>
            <person name="Hyman R.W."/>
            <person name="Olinger L."/>
            <person name="Grimwood J."/>
            <person name="Davis R.W."/>
            <person name="Stephens R.S."/>
        </authorList>
    </citation>
    <scope>NUCLEOTIDE SEQUENCE [LARGE SCALE GENOMIC DNA]</scope>
    <source>
        <strain>CWL029</strain>
    </source>
</reference>
<reference key="2">
    <citation type="journal article" date="2000" name="Nucleic Acids Res.">
        <title>Genome sequences of Chlamydia trachomatis MoPn and Chlamydia pneumoniae AR39.</title>
        <authorList>
            <person name="Read T.D."/>
            <person name="Brunham R.C."/>
            <person name="Shen C."/>
            <person name="Gill S.R."/>
            <person name="Heidelberg J.F."/>
            <person name="White O."/>
            <person name="Hickey E.K."/>
            <person name="Peterson J.D."/>
            <person name="Utterback T.R."/>
            <person name="Berry K.J."/>
            <person name="Bass S."/>
            <person name="Linher K.D."/>
            <person name="Weidman J.F."/>
            <person name="Khouri H.M."/>
            <person name="Craven B."/>
            <person name="Bowman C."/>
            <person name="Dodson R.J."/>
            <person name="Gwinn M.L."/>
            <person name="Nelson W.C."/>
            <person name="DeBoy R.T."/>
            <person name="Kolonay J.F."/>
            <person name="McClarty G."/>
            <person name="Salzberg S.L."/>
            <person name="Eisen J.A."/>
            <person name="Fraser C.M."/>
        </authorList>
    </citation>
    <scope>NUCLEOTIDE SEQUENCE [LARGE SCALE GENOMIC DNA]</scope>
    <source>
        <strain>AR39</strain>
    </source>
</reference>
<reference key="3">
    <citation type="journal article" date="2000" name="Nucleic Acids Res.">
        <title>Comparison of whole genome sequences of Chlamydia pneumoniae J138 from Japan and CWL029 from USA.</title>
        <authorList>
            <person name="Shirai M."/>
            <person name="Hirakawa H."/>
            <person name="Kimoto M."/>
            <person name="Tabuchi M."/>
            <person name="Kishi F."/>
            <person name="Ouchi K."/>
            <person name="Shiba T."/>
            <person name="Ishii K."/>
            <person name="Hattori M."/>
            <person name="Kuhara S."/>
            <person name="Nakazawa T."/>
        </authorList>
    </citation>
    <scope>NUCLEOTIDE SEQUENCE [LARGE SCALE GENOMIC DNA]</scope>
    <source>
        <strain>J138</strain>
    </source>
</reference>
<reference key="4">
    <citation type="submission" date="2002-05" db="EMBL/GenBank/DDBJ databases">
        <title>The genome sequence of Chlamydia pneumoniae TW183 and comparison with other Chlamydia strains based on whole genome sequence analysis.</title>
        <authorList>
            <person name="Geng M.M."/>
            <person name="Schuhmacher A."/>
            <person name="Muehldorfer I."/>
            <person name="Bensch K.W."/>
            <person name="Schaefer K.P."/>
            <person name="Schneider S."/>
            <person name="Pohl T."/>
            <person name="Essig A."/>
            <person name="Marre R."/>
            <person name="Melchers K."/>
        </authorList>
    </citation>
    <scope>NUCLEOTIDE SEQUENCE [LARGE SCALE GENOMIC DNA]</scope>
    <source>
        <strain>TW-183</strain>
    </source>
</reference>
<dbReference type="EC" id="6.3.3.3" evidence="1"/>
<dbReference type="EMBL" id="AE001363">
    <property type="protein sequence ID" value="AAD19179.1"/>
    <property type="molecule type" value="Genomic_DNA"/>
</dbReference>
<dbReference type="EMBL" id="AE002161">
    <property type="protein sequence ID" value="AAF38607.1"/>
    <property type="molecule type" value="Genomic_DNA"/>
</dbReference>
<dbReference type="EMBL" id="BA000008">
    <property type="protein sequence ID" value="BAA99249.1"/>
    <property type="molecule type" value="Genomic_DNA"/>
</dbReference>
<dbReference type="EMBL" id="AE009440">
    <property type="protein sequence ID" value="AAP99011.1"/>
    <property type="molecule type" value="Genomic_DNA"/>
</dbReference>
<dbReference type="PIR" id="F72004">
    <property type="entry name" value="F72004"/>
</dbReference>
<dbReference type="PIR" id="G86620">
    <property type="entry name" value="G86620"/>
</dbReference>
<dbReference type="RefSeq" id="NP_225236.1">
    <property type="nucleotide sequence ID" value="NC_000922.1"/>
</dbReference>
<dbReference type="RefSeq" id="WP_010883675.1">
    <property type="nucleotide sequence ID" value="NZ_LN847257.1"/>
</dbReference>
<dbReference type="SMR" id="Q9Z6L7"/>
<dbReference type="STRING" id="406984.CPK_ORF00469"/>
<dbReference type="GeneID" id="45051100"/>
<dbReference type="KEGG" id="cpa:CP_0810"/>
<dbReference type="KEGG" id="cpj:bioD"/>
<dbReference type="KEGG" id="cpn:CPn_1042"/>
<dbReference type="KEGG" id="cpt:CpB1082"/>
<dbReference type="PATRIC" id="fig|115713.3.peg.1141"/>
<dbReference type="eggNOG" id="COG0132">
    <property type="taxonomic scope" value="Bacteria"/>
</dbReference>
<dbReference type="HOGENOM" id="CLU_072551_2_0_0"/>
<dbReference type="OMA" id="NPIVIFQ"/>
<dbReference type="OrthoDB" id="9802097at2"/>
<dbReference type="UniPathway" id="UPA00078">
    <property type="reaction ID" value="UER00161"/>
</dbReference>
<dbReference type="Proteomes" id="UP000000583">
    <property type="component" value="Chromosome"/>
</dbReference>
<dbReference type="Proteomes" id="UP000000801">
    <property type="component" value="Chromosome"/>
</dbReference>
<dbReference type="GO" id="GO:0005829">
    <property type="term" value="C:cytosol"/>
    <property type="evidence" value="ECO:0007669"/>
    <property type="project" value="TreeGrafter"/>
</dbReference>
<dbReference type="GO" id="GO:0005524">
    <property type="term" value="F:ATP binding"/>
    <property type="evidence" value="ECO:0007669"/>
    <property type="project" value="UniProtKB-UniRule"/>
</dbReference>
<dbReference type="GO" id="GO:0004141">
    <property type="term" value="F:dethiobiotin synthase activity"/>
    <property type="evidence" value="ECO:0007669"/>
    <property type="project" value="UniProtKB-UniRule"/>
</dbReference>
<dbReference type="GO" id="GO:0000287">
    <property type="term" value="F:magnesium ion binding"/>
    <property type="evidence" value="ECO:0007669"/>
    <property type="project" value="UniProtKB-UniRule"/>
</dbReference>
<dbReference type="GO" id="GO:0009102">
    <property type="term" value="P:biotin biosynthetic process"/>
    <property type="evidence" value="ECO:0007669"/>
    <property type="project" value="UniProtKB-UniRule"/>
</dbReference>
<dbReference type="CDD" id="cd03109">
    <property type="entry name" value="DTBS"/>
    <property type="match status" value="1"/>
</dbReference>
<dbReference type="Gene3D" id="3.40.50.300">
    <property type="entry name" value="P-loop containing nucleotide triphosphate hydrolases"/>
    <property type="match status" value="1"/>
</dbReference>
<dbReference type="HAMAP" id="MF_00336">
    <property type="entry name" value="BioD"/>
    <property type="match status" value="1"/>
</dbReference>
<dbReference type="InterPro" id="IPR004472">
    <property type="entry name" value="DTB_synth_BioD"/>
</dbReference>
<dbReference type="InterPro" id="IPR027417">
    <property type="entry name" value="P-loop_NTPase"/>
</dbReference>
<dbReference type="NCBIfam" id="TIGR00347">
    <property type="entry name" value="bioD"/>
    <property type="match status" value="1"/>
</dbReference>
<dbReference type="PANTHER" id="PTHR43210:SF2">
    <property type="entry name" value="ATP-DEPENDENT DETHIOBIOTIN SYNTHETASE BIOD 2"/>
    <property type="match status" value="1"/>
</dbReference>
<dbReference type="PANTHER" id="PTHR43210">
    <property type="entry name" value="DETHIOBIOTIN SYNTHETASE"/>
    <property type="match status" value="1"/>
</dbReference>
<dbReference type="Pfam" id="PF13500">
    <property type="entry name" value="AAA_26"/>
    <property type="match status" value="1"/>
</dbReference>
<dbReference type="PIRSF" id="PIRSF006755">
    <property type="entry name" value="DTB_synth"/>
    <property type="match status" value="1"/>
</dbReference>
<dbReference type="SUPFAM" id="SSF52540">
    <property type="entry name" value="P-loop containing nucleoside triphosphate hydrolases"/>
    <property type="match status" value="1"/>
</dbReference>
<keyword id="KW-0067">ATP-binding</keyword>
<keyword id="KW-0093">Biotin biosynthesis</keyword>
<keyword id="KW-0963">Cytoplasm</keyword>
<keyword id="KW-0436">Ligase</keyword>
<keyword id="KW-0460">Magnesium</keyword>
<keyword id="KW-0479">Metal-binding</keyword>
<keyword id="KW-0547">Nucleotide-binding</keyword>
<proteinExistence type="inferred from homology"/>
<protein>
    <recommendedName>
        <fullName evidence="1">ATP-dependent dethiobiotin synthetase BioD</fullName>
        <ecNumber evidence="1">6.3.3.3</ecNumber>
    </recommendedName>
    <alternativeName>
        <fullName evidence="1">DTB synthetase</fullName>
        <shortName evidence="1">DTBS</shortName>
    </alternativeName>
    <alternativeName>
        <fullName evidence="1">Dethiobiotin synthase</fullName>
    </alternativeName>
</protein>
<accession>Q9Z6L7</accession>
<name>BIOD_CHLPN</name>